<gene>
    <name evidence="1" type="primary">ccsA</name>
</gene>
<keyword id="KW-0150">Chloroplast</keyword>
<keyword id="KW-0201">Cytochrome c-type biogenesis</keyword>
<keyword id="KW-0472">Membrane</keyword>
<keyword id="KW-0934">Plastid</keyword>
<keyword id="KW-0793">Thylakoid</keyword>
<keyword id="KW-0812">Transmembrane</keyword>
<keyword id="KW-1133">Transmembrane helix</keyword>
<comment type="function">
    <text evidence="1">Required during biogenesis of c-type cytochromes (cytochrome c6 and cytochrome f) at the step of heme attachment.</text>
</comment>
<comment type="subunit">
    <text evidence="1">May interact with Ccs1.</text>
</comment>
<comment type="subcellular location">
    <subcellularLocation>
        <location evidence="1">Plastid</location>
        <location evidence="1">Chloroplast thylakoid membrane</location>
        <topology evidence="1">Multi-pass membrane protein</topology>
    </subcellularLocation>
</comment>
<comment type="similarity">
    <text evidence="1">Belongs to the CcmF/CycK/Ccl1/NrfE/CcsA family.</text>
</comment>
<protein>
    <recommendedName>
        <fullName evidence="1">Cytochrome c biogenesis protein CcsA</fullName>
    </recommendedName>
</protein>
<geneLocation type="chloroplast"/>
<reference key="1">
    <citation type="submission" date="2007-03" db="EMBL/GenBank/DDBJ databases">
        <title>Sequencing analysis of Aethionema grandiflorum chloroplast DNA.</title>
        <authorList>
            <person name="Hosouchi T."/>
            <person name="Tsuruoka H."/>
            <person name="Kotani H."/>
        </authorList>
    </citation>
    <scope>NUCLEOTIDE SEQUENCE [LARGE SCALE GENOMIC DNA]</scope>
</reference>
<sequence>MIFSILEHILTHISFSVVSIVMTIYFLTLLVNLDESIGFYYSSDKGIIITFFSITGFLFTRWIFSGHFPLSNLYESLIFLSWAFSIIHMISFFNKKRKKNLNAITAPSAIFIQGFATSGLLNKMPQSAILVPALQSQWLMMHVSMMVLGYGALLCGSLLSIALLVITFRKVGPFFYKKNINRKKFLTEFFSFDVLYYINERNSILLKQNINLSFSRNYYRYQLIEQLDYWSYRIISLGFLFLTIGILSGAVWANETWGSYWNWDPKETWAFITWTIFAIYLHIKTKQNGRGINSAIVASIGFLVIWICYFGVNLLGIGLHSYGSFTSN</sequence>
<organism>
    <name type="scientific">Aethionema grandiflorum</name>
    <name type="common">Persian stone-cress</name>
    <dbReference type="NCBI Taxonomy" id="72657"/>
    <lineage>
        <taxon>Eukaryota</taxon>
        <taxon>Viridiplantae</taxon>
        <taxon>Streptophyta</taxon>
        <taxon>Embryophyta</taxon>
        <taxon>Tracheophyta</taxon>
        <taxon>Spermatophyta</taxon>
        <taxon>Magnoliopsida</taxon>
        <taxon>eudicotyledons</taxon>
        <taxon>Gunneridae</taxon>
        <taxon>Pentapetalae</taxon>
        <taxon>rosids</taxon>
        <taxon>malvids</taxon>
        <taxon>Brassicales</taxon>
        <taxon>Brassicaceae</taxon>
        <taxon>Aethionemeae</taxon>
        <taxon>Aethionema</taxon>
    </lineage>
</organism>
<proteinExistence type="inferred from homology"/>
<name>CCSA_AETGR</name>
<dbReference type="EMBL" id="AP009367">
    <property type="protein sequence ID" value="BAF49904.1"/>
    <property type="molecule type" value="Genomic_DNA"/>
</dbReference>
<dbReference type="RefSeq" id="YP_001123079.1">
    <property type="nucleotide sequence ID" value="NC_009266.1"/>
</dbReference>
<dbReference type="SMR" id="A4QJP9"/>
<dbReference type="GeneID" id="4962339"/>
<dbReference type="GO" id="GO:0009535">
    <property type="term" value="C:chloroplast thylakoid membrane"/>
    <property type="evidence" value="ECO:0007669"/>
    <property type="project" value="UniProtKB-SubCell"/>
</dbReference>
<dbReference type="GO" id="GO:0005886">
    <property type="term" value="C:plasma membrane"/>
    <property type="evidence" value="ECO:0007669"/>
    <property type="project" value="TreeGrafter"/>
</dbReference>
<dbReference type="GO" id="GO:0020037">
    <property type="term" value="F:heme binding"/>
    <property type="evidence" value="ECO:0007669"/>
    <property type="project" value="InterPro"/>
</dbReference>
<dbReference type="GO" id="GO:0017004">
    <property type="term" value="P:cytochrome complex assembly"/>
    <property type="evidence" value="ECO:0007669"/>
    <property type="project" value="UniProtKB-UniRule"/>
</dbReference>
<dbReference type="HAMAP" id="MF_01391">
    <property type="entry name" value="CytC_CcsA"/>
    <property type="match status" value="1"/>
</dbReference>
<dbReference type="InterPro" id="IPR002541">
    <property type="entry name" value="Cyt_c_assembly"/>
</dbReference>
<dbReference type="InterPro" id="IPR017562">
    <property type="entry name" value="Cyt_c_biogenesis_CcsA"/>
</dbReference>
<dbReference type="InterPro" id="IPR045062">
    <property type="entry name" value="Cyt_c_biogenesis_CcsA/CcmC"/>
</dbReference>
<dbReference type="NCBIfam" id="TIGR03144">
    <property type="entry name" value="cytochr_II_ccsB"/>
    <property type="match status" value="1"/>
</dbReference>
<dbReference type="PANTHER" id="PTHR30071:SF1">
    <property type="entry name" value="CYTOCHROME B_B6 PROTEIN-RELATED"/>
    <property type="match status" value="1"/>
</dbReference>
<dbReference type="PANTHER" id="PTHR30071">
    <property type="entry name" value="HEME EXPORTER PROTEIN C"/>
    <property type="match status" value="1"/>
</dbReference>
<dbReference type="Pfam" id="PF01578">
    <property type="entry name" value="Cytochrom_C_asm"/>
    <property type="match status" value="1"/>
</dbReference>
<feature type="chain" id="PRO_0000353728" description="Cytochrome c biogenesis protein CcsA">
    <location>
        <begin position="1"/>
        <end position="328"/>
    </location>
</feature>
<feature type="transmembrane region" description="Helical" evidence="1">
    <location>
        <begin position="13"/>
        <end position="33"/>
    </location>
</feature>
<feature type="transmembrane region" description="Helical" evidence="1">
    <location>
        <begin position="46"/>
        <end position="66"/>
    </location>
</feature>
<feature type="transmembrane region" description="Helical" evidence="1">
    <location>
        <begin position="73"/>
        <end position="93"/>
    </location>
</feature>
<feature type="transmembrane region" description="Helical" evidence="1">
    <location>
        <begin position="101"/>
        <end position="121"/>
    </location>
</feature>
<feature type="transmembrane region" description="Helical" evidence="1">
    <location>
        <begin position="146"/>
        <end position="166"/>
    </location>
</feature>
<feature type="transmembrane region" description="Helical" evidence="1">
    <location>
        <begin position="234"/>
        <end position="254"/>
    </location>
</feature>
<feature type="transmembrane region" description="Helical" evidence="1">
    <location>
        <begin position="263"/>
        <end position="283"/>
    </location>
</feature>
<feature type="transmembrane region" description="Helical" evidence="1">
    <location>
        <begin position="295"/>
        <end position="315"/>
    </location>
</feature>
<evidence type="ECO:0000255" key="1">
    <source>
        <dbReference type="HAMAP-Rule" id="MF_01391"/>
    </source>
</evidence>
<accession>A4QJP9</accession>